<organism>
    <name type="scientific">Deinococcus geothermalis (strain DSM 11300 / CIP 105573 / AG-3a)</name>
    <dbReference type="NCBI Taxonomy" id="319795"/>
    <lineage>
        <taxon>Bacteria</taxon>
        <taxon>Thermotogati</taxon>
        <taxon>Deinococcota</taxon>
        <taxon>Deinococci</taxon>
        <taxon>Deinococcales</taxon>
        <taxon>Deinococcaceae</taxon>
        <taxon>Deinococcus</taxon>
    </lineage>
</organism>
<reference key="1">
    <citation type="submission" date="2006-04" db="EMBL/GenBank/DDBJ databases">
        <title>Complete sequence of chromosome of Deinococcus geothermalis DSM 11300.</title>
        <authorList>
            <person name="Copeland A."/>
            <person name="Lucas S."/>
            <person name="Lapidus A."/>
            <person name="Barry K."/>
            <person name="Detter J.C."/>
            <person name="Glavina del Rio T."/>
            <person name="Hammon N."/>
            <person name="Israni S."/>
            <person name="Dalin E."/>
            <person name="Tice H."/>
            <person name="Pitluck S."/>
            <person name="Brettin T."/>
            <person name="Bruce D."/>
            <person name="Han C."/>
            <person name="Tapia R."/>
            <person name="Saunders E."/>
            <person name="Gilna P."/>
            <person name="Schmutz J."/>
            <person name="Larimer F."/>
            <person name="Land M."/>
            <person name="Hauser L."/>
            <person name="Kyrpides N."/>
            <person name="Kim E."/>
            <person name="Daly M.J."/>
            <person name="Fredrickson J.K."/>
            <person name="Makarova K.S."/>
            <person name="Gaidamakova E.K."/>
            <person name="Zhai M."/>
            <person name="Richardson P."/>
        </authorList>
    </citation>
    <scope>NUCLEOTIDE SEQUENCE [LARGE SCALE GENOMIC DNA]</scope>
    <source>
        <strain>DSM 11300 / CIP 105573 / AG-3a</strain>
    </source>
</reference>
<keyword id="KW-0963">Cytoplasm</keyword>
<keyword id="KW-0489">Methyltransferase</keyword>
<keyword id="KW-0698">rRNA processing</keyword>
<keyword id="KW-0949">S-adenosyl-L-methionine</keyword>
<keyword id="KW-0808">Transferase</keyword>
<proteinExistence type="inferred from homology"/>
<feature type="chain" id="PRO_0000335345" description="Ribosomal RNA small subunit methyltransferase G">
    <location>
        <begin position="1"/>
        <end position="245"/>
    </location>
</feature>
<feature type="binding site" evidence="1">
    <location>
        <position position="80"/>
    </location>
    <ligand>
        <name>S-adenosyl-L-methionine</name>
        <dbReference type="ChEBI" id="CHEBI:59789"/>
    </ligand>
</feature>
<feature type="binding site" evidence="1">
    <location>
        <position position="85"/>
    </location>
    <ligand>
        <name>S-adenosyl-L-methionine</name>
        <dbReference type="ChEBI" id="CHEBI:59789"/>
    </ligand>
</feature>
<feature type="binding site" evidence="1">
    <location>
        <begin position="103"/>
        <end position="105"/>
    </location>
    <ligand>
        <name>S-adenosyl-L-methionine</name>
        <dbReference type="ChEBI" id="CHEBI:59789"/>
    </ligand>
</feature>
<feature type="binding site" evidence="1">
    <location>
        <begin position="131"/>
        <end position="132"/>
    </location>
    <ligand>
        <name>S-adenosyl-L-methionine</name>
        <dbReference type="ChEBI" id="CHEBI:59789"/>
    </ligand>
</feature>
<feature type="binding site" evidence="1">
    <location>
        <position position="150"/>
    </location>
    <ligand>
        <name>S-adenosyl-L-methionine</name>
        <dbReference type="ChEBI" id="CHEBI:59789"/>
    </ligand>
</feature>
<comment type="function">
    <text evidence="1">Specifically methylates the N7 position of a guanine in 16S rRNA.</text>
</comment>
<comment type="subcellular location">
    <subcellularLocation>
        <location evidence="1">Cytoplasm</location>
    </subcellularLocation>
</comment>
<comment type="similarity">
    <text evidence="1">Belongs to the methyltransferase superfamily. RNA methyltransferase RsmG family.</text>
</comment>
<sequence length="245" mass="26611">MTPEGRALLLAGAAELGLELSAEHLDRFARLLVRLTEGSAQLNLTALHQERDIVLKHFVDSLTCLRGGWLDGAARVLDLGTGAGFPALPLAIVRPDLQLVALDATRKKVDFVERTARSLELNHVQPLTGRAETLGRDPAQRESYDRVVTRAVAALPILAELTLPFLRMGGFLLAQKGPIGPEELEAGTRAAQEVGGEIRAIDAFVLPVAGDARTLVVVEKTAPTPERYPRREGVPNRKPLFWRAT</sequence>
<dbReference type="EC" id="2.1.1.-" evidence="1"/>
<dbReference type="EMBL" id="CP000359">
    <property type="protein sequence ID" value="ABF46627.1"/>
    <property type="molecule type" value="Genomic_DNA"/>
</dbReference>
<dbReference type="RefSeq" id="WP_011531446.1">
    <property type="nucleotide sequence ID" value="NC_008025.1"/>
</dbReference>
<dbReference type="SMR" id="Q1IVV7"/>
<dbReference type="STRING" id="319795.Dgeo_2335"/>
<dbReference type="KEGG" id="dge:Dgeo_2335"/>
<dbReference type="eggNOG" id="COG0357">
    <property type="taxonomic scope" value="Bacteria"/>
</dbReference>
<dbReference type="HOGENOM" id="CLU_065341_0_1_0"/>
<dbReference type="Proteomes" id="UP000002431">
    <property type="component" value="Chromosome"/>
</dbReference>
<dbReference type="GO" id="GO:0005829">
    <property type="term" value="C:cytosol"/>
    <property type="evidence" value="ECO:0007669"/>
    <property type="project" value="TreeGrafter"/>
</dbReference>
<dbReference type="GO" id="GO:0070043">
    <property type="term" value="F:rRNA (guanine-N7-)-methyltransferase activity"/>
    <property type="evidence" value="ECO:0007669"/>
    <property type="project" value="UniProtKB-UniRule"/>
</dbReference>
<dbReference type="CDD" id="cd02440">
    <property type="entry name" value="AdoMet_MTases"/>
    <property type="match status" value="1"/>
</dbReference>
<dbReference type="FunFam" id="3.40.50.150:FF:000041">
    <property type="entry name" value="Ribosomal RNA small subunit methyltransferase G"/>
    <property type="match status" value="1"/>
</dbReference>
<dbReference type="Gene3D" id="3.40.50.150">
    <property type="entry name" value="Vaccinia Virus protein VP39"/>
    <property type="match status" value="1"/>
</dbReference>
<dbReference type="HAMAP" id="MF_00074">
    <property type="entry name" value="16SrRNA_methyltr_G"/>
    <property type="match status" value="1"/>
</dbReference>
<dbReference type="InterPro" id="IPR003682">
    <property type="entry name" value="rRNA_ssu_MeTfrase_G"/>
</dbReference>
<dbReference type="InterPro" id="IPR029063">
    <property type="entry name" value="SAM-dependent_MTases_sf"/>
</dbReference>
<dbReference type="NCBIfam" id="TIGR00138">
    <property type="entry name" value="rsmG_gidB"/>
    <property type="match status" value="1"/>
</dbReference>
<dbReference type="PANTHER" id="PTHR31760">
    <property type="entry name" value="S-ADENOSYL-L-METHIONINE-DEPENDENT METHYLTRANSFERASES SUPERFAMILY PROTEIN"/>
    <property type="match status" value="1"/>
</dbReference>
<dbReference type="PANTHER" id="PTHR31760:SF0">
    <property type="entry name" value="S-ADENOSYL-L-METHIONINE-DEPENDENT METHYLTRANSFERASES SUPERFAMILY PROTEIN"/>
    <property type="match status" value="1"/>
</dbReference>
<dbReference type="Pfam" id="PF02527">
    <property type="entry name" value="GidB"/>
    <property type="match status" value="1"/>
</dbReference>
<dbReference type="PIRSF" id="PIRSF003078">
    <property type="entry name" value="GidB"/>
    <property type="match status" value="1"/>
</dbReference>
<dbReference type="SUPFAM" id="SSF53335">
    <property type="entry name" value="S-adenosyl-L-methionine-dependent methyltransferases"/>
    <property type="match status" value="1"/>
</dbReference>
<gene>
    <name evidence="1" type="primary">rsmG</name>
    <name type="ordered locus">Dgeo_2335</name>
</gene>
<name>RSMG_DEIGD</name>
<accession>Q1IVV7</accession>
<protein>
    <recommendedName>
        <fullName evidence="1">Ribosomal RNA small subunit methyltransferase G</fullName>
        <ecNumber evidence="1">2.1.1.-</ecNumber>
    </recommendedName>
    <alternativeName>
        <fullName evidence="1">16S rRNA 7-methylguanosine methyltransferase</fullName>
        <shortName evidence="1">16S rRNA m7G methyltransferase</shortName>
    </alternativeName>
</protein>
<evidence type="ECO:0000255" key="1">
    <source>
        <dbReference type="HAMAP-Rule" id="MF_00074"/>
    </source>
</evidence>